<feature type="signal peptide" evidence="3">
    <location>
        <begin position="1"/>
        <end position="18"/>
    </location>
</feature>
<feature type="propeptide" id="PRO_0000009160" evidence="5">
    <location>
        <begin position="19"/>
        <end position="46"/>
    </location>
</feature>
<feature type="chain" id="PRO_0000009161" description="Major fimbrium subunit FimA type-2">
    <location>
        <begin position="47"/>
        <end position="384"/>
    </location>
</feature>
<feature type="region of interest" description="Important for oligomerization and fimbrium assembly" evidence="2">
    <location>
        <begin position="375"/>
        <end position="384"/>
    </location>
</feature>
<feature type="site" description="Cleavage; by gingipain" evidence="1">
    <location>
        <begin position="46"/>
        <end position="47"/>
    </location>
</feature>
<feature type="lipid moiety-binding region" description="N-palmitoyl cysteine" evidence="3">
    <location>
        <position position="19"/>
    </location>
</feature>
<feature type="lipid moiety-binding region" description="S-diacylglycerol cysteine" evidence="3">
    <location>
        <position position="19"/>
    </location>
</feature>
<feature type="sequence variant" description="In strain: OMZ409.">
    <original>EMKLA</original>
    <variation>AMELV</variation>
    <location>
        <begin position="100"/>
        <end position="104"/>
    </location>
</feature>
<feature type="sequence variant" description="In strain: OMZ409.">
    <original>A</original>
    <variation>T</variation>
    <location>
        <position position="126"/>
    </location>
</feature>
<feature type="sequence variant" description="In strain: OMZ409.">
    <original>E</original>
    <variation>D</variation>
    <location>
        <position position="136"/>
    </location>
</feature>
<name>FIMA2_PORGN</name>
<comment type="function">
    <text evidence="4 6">Structural subunit of the major fimbriae (Probable). These long, filamentous pili are attached to the cell surface; they mediate biofilm formation, adhesion onto host cells and onto other bacteria that are part of the oral microbiome. They play an important role in the invasion of periodontal tissues. Fimbriae and their constituents are major virulence factors. FimA proteins from different strains have highly divergent sequences, and this has been used for classification. The sequence-based classification correlates with pathogenicity.</text>
</comment>
<comment type="subunit">
    <text evidence="1 2">Fimbriae are composed of a major, structural subunit (FimA) and the minor components FimC, FimD and FimE (By similarity). Head-to-tail oligomerization of FimA molecules mediates assembly of the fimbrium stalk, while the minor components probably form the fimbrium tip. Linear, head-to-tail oligomerization of FimA is mediated by a conformation change, facilitating the insertion of a C-terminal beta-strand into a groove in the N-terminal domain of the following subunit (By similarity).</text>
</comment>
<comment type="subcellular location">
    <subcellularLocation>
        <location evidence="1">Fimbrium</location>
    </subcellularLocation>
    <subcellularLocation>
        <location evidence="1">Cell outer membrane</location>
    </subcellularLocation>
    <text evidence="1">Synthesized as palmitoylated precursor. The lipidated propeptide is removed during processing to the mature protein.</text>
</comment>
<comment type="PTM">
    <text evidence="1">Synthesized as palmitoylated lipoprotein precursor. Efficient export to the outer membrane and integration into fimbriae requires lipidation and subsequent proteolytic removal of the lipidated propeptide.</text>
</comment>
<comment type="miscellaneous">
    <text evidence="6">The name (major fimbrium subunit) does not indicate the abundance of the protein, but is derived from the greater length of the major fimbriae. In strain ATCC 33277 and strain 381, major fimbriae are 300 - 1600 nM in length and about 5 nm in diameter. In contrast, minor fimbriae are only about 80 - 120 nm long. This length difference is observed only in a small number of strains, including strain ATCC 33277 and strain 381, and is due to a loss of function mutation in FimB, a protein that restricts fimbrial length in other strains.</text>
</comment>
<comment type="similarity">
    <text evidence="6">Belongs to the bacteroidetes fimbrillin superfamily. FimA/Mfa1 family.</text>
</comment>
<comment type="sequence caution" evidence="6">
    <conflict type="erroneous initiation">
        <sequence resource="EMBL-CDS" id="BAA04623"/>
    </conflict>
    <text>Truncated N-terminus.</text>
</comment>
<comment type="sequence caution" evidence="6">
    <conflict type="erroneous initiation">
        <sequence resource="EMBL-CDS" id="BAA04624"/>
    </conflict>
    <text>Truncated N-terminus.</text>
</comment>
<comment type="sequence caution" evidence="6">
    <conflict type="erroneous initiation">
        <sequence resource="EMBL-CDS" id="BAA04625"/>
    </conflict>
    <text>Truncated N-terminus.</text>
</comment>
<organism>
    <name type="scientific">Porphyromonas gingivalis</name>
    <name type="common">Bacteroides gingivalis</name>
    <dbReference type="NCBI Taxonomy" id="837"/>
    <lineage>
        <taxon>Bacteria</taxon>
        <taxon>Pseudomonadati</taxon>
        <taxon>Bacteroidota</taxon>
        <taxon>Bacteroidia</taxon>
        <taxon>Bacteroidales</taxon>
        <taxon>Porphyromonadaceae</taxon>
        <taxon>Porphyromonas</taxon>
    </lineage>
</organism>
<dbReference type="EMBL" id="D17797">
    <property type="protein sequence ID" value="BAA04623.1"/>
    <property type="status" value="ALT_INIT"/>
    <property type="molecule type" value="Genomic_DNA"/>
</dbReference>
<dbReference type="EMBL" id="D17798">
    <property type="protein sequence ID" value="BAA04624.1"/>
    <property type="status" value="ALT_INIT"/>
    <property type="molecule type" value="Genomic_DNA"/>
</dbReference>
<dbReference type="EMBL" id="D17799">
    <property type="protein sequence ID" value="BAA04625.1"/>
    <property type="status" value="ALT_INIT"/>
    <property type="molecule type" value="Genomic_DNA"/>
</dbReference>
<dbReference type="PIR" id="JN0916">
    <property type="entry name" value="JN0916"/>
</dbReference>
<dbReference type="PIR" id="JN0918">
    <property type="entry name" value="JN0918"/>
</dbReference>
<dbReference type="RefSeq" id="WP_097555319.1">
    <property type="nucleotide sequence ID" value="NZ_NSLP01000019.1"/>
</dbReference>
<dbReference type="SMR" id="Q51822"/>
<dbReference type="GO" id="GO:0009279">
    <property type="term" value="C:cell outer membrane"/>
    <property type="evidence" value="ECO:0007669"/>
    <property type="project" value="UniProtKB-SubCell"/>
</dbReference>
<dbReference type="GO" id="GO:0009289">
    <property type="term" value="C:pilus"/>
    <property type="evidence" value="ECO:0000250"/>
    <property type="project" value="UniProtKB"/>
</dbReference>
<dbReference type="GO" id="GO:0005198">
    <property type="term" value="F:structural molecule activity"/>
    <property type="evidence" value="ECO:0007669"/>
    <property type="project" value="InterPro"/>
</dbReference>
<dbReference type="GO" id="GO:0007155">
    <property type="term" value="P:cell adhesion"/>
    <property type="evidence" value="ECO:0007669"/>
    <property type="project" value="UniProtKB-KW"/>
</dbReference>
<dbReference type="FunFam" id="2.60.40.2580:FF:000001">
    <property type="entry name" value="Major fimbrium subunit FimA type-2"/>
    <property type="match status" value="1"/>
</dbReference>
<dbReference type="FunFam" id="2.60.40.3690:FF:000001">
    <property type="entry name" value="Major fimbrium subunit FimA type-4"/>
    <property type="match status" value="1"/>
</dbReference>
<dbReference type="Gene3D" id="2.60.40.2580">
    <property type="match status" value="1"/>
</dbReference>
<dbReference type="Gene3D" id="2.60.40.3690">
    <property type="match status" value="1"/>
</dbReference>
<dbReference type="InterPro" id="IPR053878">
    <property type="entry name" value="FimA_C"/>
</dbReference>
<dbReference type="InterPro" id="IPR029141">
    <property type="entry name" value="FimA_N"/>
</dbReference>
<dbReference type="InterPro" id="IPR008110">
    <property type="entry name" value="Fimbrillin"/>
</dbReference>
<dbReference type="Pfam" id="PF22492">
    <property type="entry name" value="FimA4_C"/>
    <property type="match status" value="1"/>
</dbReference>
<dbReference type="Pfam" id="PF06321">
    <property type="entry name" value="P_gingi_FimA"/>
    <property type="match status" value="1"/>
</dbReference>
<dbReference type="PRINTS" id="PR01737">
    <property type="entry name" value="FIMBRILLIN"/>
</dbReference>
<dbReference type="PROSITE" id="PS51257">
    <property type="entry name" value="PROKAR_LIPOPROTEIN"/>
    <property type="match status" value="1"/>
</dbReference>
<gene>
    <name type="primary">fimA</name>
</gene>
<evidence type="ECO:0000250" key="1">
    <source>
        <dbReference type="UniProtKB" id="B2RH54"/>
    </source>
</evidence>
<evidence type="ECO:0000250" key="2">
    <source>
        <dbReference type="UniProtKB" id="P59914"/>
    </source>
</evidence>
<evidence type="ECO:0000255" key="3">
    <source>
        <dbReference type="PROSITE-ProRule" id="PRU00303"/>
    </source>
</evidence>
<evidence type="ECO:0000269" key="4">
    <source>
    </source>
</evidence>
<evidence type="ECO:0000269" key="5">
    <source>
    </source>
</evidence>
<evidence type="ECO:0000305" key="6"/>
<protein>
    <recommendedName>
        <fullName>Major fimbrium subunit FimA type-2</fullName>
    </recommendedName>
    <alternativeName>
        <fullName>Fimbrillin</fullName>
        <shortName>Fimbrilin</shortName>
    </alternativeName>
    <alternativeName>
        <fullName>Major fimbrial subunit protein type II</fullName>
    </alternativeName>
</protein>
<keyword id="KW-0130">Cell adhesion</keyword>
<keyword id="KW-0998">Cell outer membrane</keyword>
<keyword id="KW-0903">Direct protein sequencing</keyword>
<keyword id="KW-0281">Fimbrium</keyword>
<keyword id="KW-0449">Lipoprotein</keyword>
<keyword id="KW-0472">Membrane</keyword>
<keyword id="KW-0564">Palmitate</keyword>
<keyword id="KW-0732">Signal</keyword>
<keyword id="KW-0843">Virulence</keyword>
<accession>Q51822</accession>
<accession>Q51823</accession>
<accession>Q51824</accession>
<reference key="1">
    <citation type="journal article" date="1993" name="Biochem. Biophys. Res. Commun.">
        <title>Molecular cloning and sequencing of the fimbrilin gene of Porphyromonas gingivalis strains and characterization of recombinant proteins.</title>
        <authorList>
            <person name="Fujiwara T."/>
            <person name="Morishima S."/>
            <person name="Takahashi I."/>
            <person name="Hamada S."/>
        </authorList>
    </citation>
    <scope>NUCLEOTIDE SEQUENCE [GENOMIC DNA]</scope>
    <source>
        <strain>HW24D1</strain>
        <strain>OMZ314</strain>
        <strain>OMZ409</strain>
    </source>
</reference>
<reference key="2">
    <citation type="journal article" date="1991" name="Infect. Immun.">
        <title>Porphyromonas (Bacteroides) gingivalis fimbrillin: size, amino-terminal sequence, and antigenic heterogeneity.</title>
        <authorList>
            <person name="Lee J.Y."/>
            <person name="Sojar H.T."/>
            <person name="Bedi G.S."/>
            <person name="Genco R.J."/>
        </authorList>
    </citation>
    <scope>PROTEIN SEQUENCE OF 47-58</scope>
</reference>
<reference key="3">
    <citation type="journal article" date="2002" name="Infect. Immun.">
        <title>Functional differences among FimA variants of Porphyromonas gingivalis and their effects on adhesion to and invasion of human epithelial cells.</title>
        <authorList>
            <person name="Nakagawa I."/>
            <person name="Amano A."/>
            <person name="Kuboniwa M."/>
            <person name="Nakamura T."/>
            <person name="Kawabata S."/>
            <person name="Hamada S."/>
        </authorList>
    </citation>
    <scope>FUNCTION</scope>
    <scope>CLASSIFICATION INTO TYPES</scope>
</reference>
<reference key="4">
    <citation type="journal article" date="2013" name="Mol. Oral. Microbiol.">
        <title>Genetic and antigenic analyses of Porphyromonas gingivalis FimA fimbriae.</title>
        <authorList>
            <person name="Nagano K."/>
            <person name="Abiko Y."/>
            <person name="Yoshida Y."/>
            <person name="Yoshimura F."/>
        </authorList>
    </citation>
    <scope>CLASSIFICATION</scope>
</reference>
<sequence length="384" mass="41869">MKKTKFFLLGLAALAMTACNKDNEAEPVTEGNATISVVLKTSNPNRAFGEDESKVAKLTVMVYNGEQQEAIKSAENATKVEDIKCSAGQRTLVVMANTGEMKLAGKTLAEVKALTTELTAENQEAAGLIMTAEPVEVTLVAGNNYYGYDGSQGGNQISQDTPLEIKRVHARMAFTEIKVQMSPSYVNKYNFAPENIYALVAKKESNLFGASLANSDDAYLTGSLTNFNGAYSPANYTHVDWLGRDYTEPSNNAPQGFYVLESTYAQNAGLRPTILCVKGKLTKHDGTPLSSEEMTAAFNAGWIVADNNPTTYYPVLVNFNSNNYTYDNGYTPKNKIERNHKYDIKLTITGPGTNNPENPITESAHLNVQCTVAEWVLVGQNATW</sequence>
<proteinExistence type="evidence at protein level"/>